<evidence type="ECO:0000255" key="1">
    <source>
        <dbReference type="HAMAP-Rule" id="MF_01338"/>
    </source>
</evidence>
<sequence>MNEAVTIRGKERYKSGVMEYKKMGYWEPDYEPKDTDVIALFRVTPQDGVDPIEAAAAVAGESSTATWTVVWTDRLTAAEKYRAKCYRVDPVPNSPGQYFAYIAYDLDLFEPGSISNLTASIIGNVFGFKPLKALRLEDMRLPIAYVKTFQGPATGIVVERERMDKFGRPLLGATVKPKLGLSGRNYGRVVYEALKGGLDFTKDDENINSQPFMHWRERFQYCMEAVNKAQAQTGEIKGTYLNVTAATMEDMYERAEYAKELGSIIVMIDLVIGYTAIQSMAKWARKNDMILHLHRAGHSTYTRQRNHGVSFRVIAKWMRLAGVDHIHAGTVVGKLEGDPATTKGYYDICREDFNPMTLENGLFFDQNWASLNKLMPVASGGIHAGQMHQLLHLLGEDVVLQFGGGTIGHPMGIAAGATANRVALEAMILARNEGRDYLHEGPEILAKAAQTCTPLKAALDTWKNVTFNYESTDTPDYAPTPSVSV</sequence>
<comment type="function">
    <text evidence="1">RuBisCO catalyzes two reactions: the carboxylation of D-ribulose 1,5-bisphosphate, the primary event in carbon dioxide fixation, as well as the oxidative fragmentation of the pentose substrate. Both reactions occur simultaneously and in competition at the same active site.</text>
</comment>
<comment type="catalytic activity">
    <reaction evidence="1">
        <text>2 (2R)-3-phosphoglycerate + 2 H(+) = D-ribulose 1,5-bisphosphate + CO2 + H2O</text>
        <dbReference type="Rhea" id="RHEA:23124"/>
        <dbReference type="ChEBI" id="CHEBI:15377"/>
        <dbReference type="ChEBI" id="CHEBI:15378"/>
        <dbReference type="ChEBI" id="CHEBI:16526"/>
        <dbReference type="ChEBI" id="CHEBI:57870"/>
        <dbReference type="ChEBI" id="CHEBI:58272"/>
        <dbReference type="EC" id="4.1.1.39"/>
    </reaction>
</comment>
<comment type="catalytic activity">
    <reaction evidence="1">
        <text>D-ribulose 1,5-bisphosphate + O2 = 2-phosphoglycolate + (2R)-3-phosphoglycerate + 2 H(+)</text>
        <dbReference type="Rhea" id="RHEA:36631"/>
        <dbReference type="ChEBI" id="CHEBI:15378"/>
        <dbReference type="ChEBI" id="CHEBI:15379"/>
        <dbReference type="ChEBI" id="CHEBI:57870"/>
        <dbReference type="ChEBI" id="CHEBI:58033"/>
        <dbReference type="ChEBI" id="CHEBI:58272"/>
    </reaction>
</comment>
<comment type="cofactor">
    <cofactor evidence="1">
        <name>Mg(2+)</name>
        <dbReference type="ChEBI" id="CHEBI:18420"/>
    </cofactor>
    <text evidence="1">Binds 1 Mg(2+) ion per subunit.</text>
</comment>
<comment type="subunit">
    <text evidence="1">Heterohexadecamer of 8 large chains and 8 small chains.</text>
</comment>
<comment type="miscellaneous">
    <text evidence="1">The basic functional RuBisCO is composed of a large chain homodimer in a 'head-to-tail' conformation. In form I RuBisCO this homodimer is arranged in a barrel-like tetramer with the small subunits forming a tetrameric 'cap' on each end of the 'barrel'.</text>
</comment>
<comment type="similarity">
    <text evidence="1">Belongs to the RuBisCO large chain family. Type I subfamily.</text>
</comment>
<protein>
    <recommendedName>
        <fullName evidence="1">Ribulose bisphosphate carboxylase large chain</fullName>
        <shortName evidence="1">RuBisCO large subunit</shortName>
        <ecNumber evidence="1">4.1.1.39</ecNumber>
    </recommendedName>
</protein>
<dbReference type="EC" id="4.1.1.39" evidence="1"/>
<dbReference type="EMBL" id="CP001096">
    <property type="protein sequence ID" value="ACF00275.1"/>
    <property type="molecule type" value="Genomic_DNA"/>
</dbReference>
<dbReference type="RefSeq" id="WP_012495166.1">
    <property type="nucleotide sequence ID" value="NC_011004.1"/>
</dbReference>
<dbReference type="SMR" id="B3Q7E1"/>
<dbReference type="KEGG" id="rpt:Rpal_1747"/>
<dbReference type="HOGENOM" id="CLU_031450_2_0_5"/>
<dbReference type="OrthoDB" id="9764279at2"/>
<dbReference type="Proteomes" id="UP000001725">
    <property type="component" value="Chromosome"/>
</dbReference>
<dbReference type="GO" id="GO:0000287">
    <property type="term" value="F:magnesium ion binding"/>
    <property type="evidence" value="ECO:0007669"/>
    <property type="project" value="UniProtKB-UniRule"/>
</dbReference>
<dbReference type="GO" id="GO:0004497">
    <property type="term" value="F:monooxygenase activity"/>
    <property type="evidence" value="ECO:0007669"/>
    <property type="project" value="UniProtKB-KW"/>
</dbReference>
<dbReference type="GO" id="GO:0016984">
    <property type="term" value="F:ribulose-bisphosphate carboxylase activity"/>
    <property type="evidence" value="ECO:0007669"/>
    <property type="project" value="UniProtKB-UniRule"/>
</dbReference>
<dbReference type="GO" id="GO:0019253">
    <property type="term" value="P:reductive pentose-phosphate cycle"/>
    <property type="evidence" value="ECO:0007669"/>
    <property type="project" value="UniProtKB-UniRule"/>
</dbReference>
<dbReference type="CDD" id="cd08212">
    <property type="entry name" value="RuBisCO_large_I"/>
    <property type="match status" value="1"/>
</dbReference>
<dbReference type="Gene3D" id="3.20.20.110">
    <property type="entry name" value="Ribulose bisphosphate carboxylase, large subunit, C-terminal domain"/>
    <property type="match status" value="1"/>
</dbReference>
<dbReference type="Gene3D" id="3.30.70.150">
    <property type="entry name" value="RuBisCO large subunit, N-terminal domain"/>
    <property type="match status" value="1"/>
</dbReference>
<dbReference type="HAMAP" id="MF_01338">
    <property type="entry name" value="RuBisCO_L_type1"/>
    <property type="match status" value="1"/>
</dbReference>
<dbReference type="InterPro" id="IPR033966">
    <property type="entry name" value="RuBisCO"/>
</dbReference>
<dbReference type="InterPro" id="IPR020878">
    <property type="entry name" value="RuBisCo_large_chain_AS"/>
</dbReference>
<dbReference type="InterPro" id="IPR000685">
    <property type="entry name" value="RuBisCO_lsu_C"/>
</dbReference>
<dbReference type="InterPro" id="IPR036376">
    <property type="entry name" value="RuBisCO_lsu_C_sf"/>
</dbReference>
<dbReference type="InterPro" id="IPR017443">
    <property type="entry name" value="RuBisCO_lsu_fd_N"/>
</dbReference>
<dbReference type="InterPro" id="IPR036422">
    <property type="entry name" value="RuBisCO_lsu_N_sf"/>
</dbReference>
<dbReference type="InterPro" id="IPR020888">
    <property type="entry name" value="RuBisCO_lsuI"/>
</dbReference>
<dbReference type="NCBIfam" id="NF003252">
    <property type="entry name" value="PRK04208.1"/>
    <property type="match status" value="1"/>
</dbReference>
<dbReference type="PANTHER" id="PTHR42704">
    <property type="entry name" value="RIBULOSE BISPHOSPHATE CARBOXYLASE"/>
    <property type="match status" value="1"/>
</dbReference>
<dbReference type="PANTHER" id="PTHR42704:SF17">
    <property type="entry name" value="RIBULOSE BISPHOSPHATE CARBOXYLASE LARGE CHAIN"/>
    <property type="match status" value="1"/>
</dbReference>
<dbReference type="Pfam" id="PF00016">
    <property type="entry name" value="RuBisCO_large"/>
    <property type="match status" value="1"/>
</dbReference>
<dbReference type="Pfam" id="PF02788">
    <property type="entry name" value="RuBisCO_large_N"/>
    <property type="match status" value="1"/>
</dbReference>
<dbReference type="SFLD" id="SFLDG01052">
    <property type="entry name" value="RuBisCO"/>
    <property type="match status" value="1"/>
</dbReference>
<dbReference type="SFLD" id="SFLDS00014">
    <property type="entry name" value="RuBisCO"/>
    <property type="match status" value="1"/>
</dbReference>
<dbReference type="SFLD" id="SFLDG00301">
    <property type="entry name" value="RuBisCO-like_proteins"/>
    <property type="match status" value="1"/>
</dbReference>
<dbReference type="SUPFAM" id="SSF51649">
    <property type="entry name" value="RuBisCo, C-terminal domain"/>
    <property type="match status" value="1"/>
</dbReference>
<dbReference type="SUPFAM" id="SSF54966">
    <property type="entry name" value="RuBisCO, large subunit, small (N-terminal) domain"/>
    <property type="match status" value="1"/>
</dbReference>
<dbReference type="PROSITE" id="PS00157">
    <property type="entry name" value="RUBISCO_LARGE"/>
    <property type="match status" value="1"/>
</dbReference>
<organism>
    <name type="scientific">Rhodopseudomonas palustris (strain TIE-1)</name>
    <dbReference type="NCBI Taxonomy" id="395960"/>
    <lineage>
        <taxon>Bacteria</taxon>
        <taxon>Pseudomonadati</taxon>
        <taxon>Pseudomonadota</taxon>
        <taxon>Alphaproteobacteria</taxon>
        <taxon>Hyphomicrobiales</taxon>
        <taxon>Nitrobacteraceae</taxon>
        <taxon>Rhodopseudomonas</taxon>
    </lineage>
</organism>
<name>RBL_RHOPT</name>
<proteinExistence type="inferred from homology"/>
<reference key="1">
    <citation type="submission" date="2008-05" db="EMBL/GenBank/DDBJ databases">
        <title>Complete sequence of Rhodopseudomonas palustris TIE-1.</title>
        <authorList>
            <consortium name="US DOE Joint Genome Institute"/>
            <person name="Lucas S."/>
            <person name="Copeland A."/>
            <person name="Lapidus A."/>
            <person name="Glavina del Rio T."/>
            <person name="Dalin E."/>
            <person name="Tice H."/>
            <person name="Pitluck S."/>
            <person name="Chain P."/>
            <person name="Malfatti S."/>
            <person name="Shin M."/>
            <person name="Vergez L."/>
            <person name="Lang D."/>
            <person name="Schmutz J."/>
            <person name="Larimer F."/>
            <person name="Land M."/>
            <person name="Hauser L."/>
            <person name="Kyrpides N."/>
            <person name="Mikhailova N."/>
            <person name="Emerson D."/>
            <person name="Newman D.K."/>
            <person name="Roden E."/>
            <person name="Richardson P."/>
        </authorList>
    </citation>
    <scope>NUCLEOTIDE SEQUENCE [LARGE SCALE GENOMIC DNA]</scope>
    <source>
        <strain>TIE-1</strain>
    </source>
</reference>
<feature type="chain" id="PRO_1000142752" description="Ribulose bisphosphate carboxylase large chain">
    <location>
        <begin position="1"/>
        <end position="485"/>
    </location>
</feature>
<feature type="active site" description="Proton acceptor" evidence="1">
    <location>
        <position position="176"/>
    </location>
</feature>
<feature type="active site" description="Proton acceptor" evidence="1">
    <location>
        <position position="294"/>
    </location>
</feature>
<feature type="binding site" description="in homodimeric partner" evidence="1">
    <location>
        <position position="124"/>
    </location>
    <ligand>
        <name>substrate</name>
    </ligand>
</feature>
<feature type="binding site" evidence="1">
    <location>
        <position position="174"/>
    </location>
    <ligand>
        <name>substrate</name>
    </ligand>
</feature>
<feature type="binding site" evidence="1">
    <location>
        <position position="178"/>
    </location>
    <ligand>
        <name>substrate</name>
    </ligand>
</feature>
<feature type="binding site" description="via carbamate group" evidence="1">
    <location>
        <position position="202"/>
    </location>
    <ligand>
        <name>Mg(2+)</name>
        <dbReference type="ChEBI" id="CHEBI:18420"/>
    </ligand>
</feature>
<feature type="binding site" evidence="1">
    <location>
        <position position="204"/>
    </location>
    <ligand>
        <name>Mg(2+)</name>
        <dbReference type="ChEBI" id="CHEBI:18420"/>
    </ligand>
</feature>
<feature type="binding site" evidence="1">
    <location>
        <position position="205"/>
    </location>
    <ligand>
        <name>Mg(2+)</name>
        <dbReference type="ChEBI" id="CHEBI:18420"/>
    </ligand>
</feature>
<feature type="binding site" evidence="1">
    <location>
        <position position="295"/>
    </location>
    <ligand>
        <name>substrate</name>
    </ligand>
</feature>
<feature type="binding site" evidence="1">
    <location>
        <position position="327"/>
    </location>
    <ligand>
        <name>substrate</name>
    </ligand>
</feature>
<feature type="binding site" evidence="1">
    <location>
        <position position="379"/>
    </location>
    <ligand>
        <name>substrate</name>
    </ligand>
</feature>
<feature type="site" description="Transition state stabilizer" evidence="1">
    <location>
        <position position="334"/>
    </location>
</feature>
<feature type="modified residue" description="N6-carboxylysine" evidence="1">
    <location>
        <position position="202"/>
    </location>
</feature>
<accession>B3Q7E1</accession>
<keyword id="KW-0113">Calvin cycle</keyword>
<keyword id="KW-0120">Carbon dioxide fixation</keyword>
<keyword id="KW-0456">Lyase</keyword>
<keyword id="KW-0460">Magnesium</keyword>
<keyword id="KW-0479">Metal-binding</keyword>
<keyword id="KW-0503">Monooxygenase</keyword>
<keyword id="KW-0560">Oxidoreductase</keyword>
<keyword id="KW-0602">Photosynthesis</keyword>
<gene>
    <name evidence="1" type="primary">cbbL</name>
    <name type="ordered locus">Rpal_1747</name>
</gene>